<reference key="1">
    <citation type="submission" date="2006-03" db="EMBL/GenBank/DDBJ databases">
        <title>Complete sequence of chromosome of Nitrobacter hamburgensis X14.</title>
        <authorList>
            <consortium name="US DOE Joint Genome Institute"/>
            <person name="Copeland A."/>
            <person name="Lucas S."/>
            <person name="Lapidus A."/>
            <person name="Barry K."/>
            <person name="Detter J.C."/>
            <person name="Glavina del Rio T."/>
            <person name="Hammon N."/>
            <person name="Israni S."/>
            <person name="Dalin E."/>
            <person name="Tice H."/>
            <person name="Pitluck S."/>
            <person name="Chain P."/>
            <person name="Malfatti S."/>
            <person name="Shin M."/>
            <person name="Vergez L."/>
            <person name="Schmutz J."/>
            <person name="Larimer F."/>
            <person name="Land M."/>
            <person name="Hauser L."/>
            <person name="Kyrpides N."/>
            <person name="Ivanova N."/>
            <person name="Ward B."/>
            <person name="Arp D."/>
            <person name="Klotz M."/>
            <person name="Stein L."/>
            <person name="O'Mullan G."/>
            <person name="Starkenburg S."/>
            <person name="Sayavedra L."/>
            <person name="Poret-Peterson A.T."/>
            <person name="Gentry M.E."/>
            <person name="Bruce D."/>
            <person name="Richardson P."/>
        </authorList>
    </citation>
    <scope>NUCLEOTIDE SEQUENCE [LARGE SCALE GENOMIC DNA]</scope>
    <source>
        <strain>DSM 10229 / NCIMB 13809 / X14</strain>
    </source>
</reference>
<sequence>MRDPVETYMNLVPMVVEQTNRGERAYDIFSRLLKERIIFVTGPVEDNMSMLVVAQLLFLEADNPKKEISMYINSPGGVVTSGLAIYDTMQFIRPPVATLCTGQAASMGSLLLAAGEKDMRHALPNARIMVHQPSGGFQGQATDIMLHAQEILNLKKRLNEIYVKHTGQTYKAIEDALERDKFLTADMARDFGLVDKVIDKRAEEPAAPKAS</sequence>
<dbReference type="EC" id="3.4.21.92" evidence="1"/>
<dbReference type="EMBL" id="CP000319">
    <property type="protein sequence ID" value="ABE63021.1"/>
    <property type="molecule type" value="Genomic_DNA"/>
</dbReference>
<dbReference type="RefSeq" id="WP_011510698.1">
    <property type="nucleotide sequence ID" value="NC_007964.1"/>
</dbReference>
<dbReference type="SMR" id="Q1QL76"/>
<dbReference type="STRING" id="323097.Nham_2229"/>
<dbReference type="MEROPS" id="S14.001"/>
<dbReference type="KEGG" id="nha:Nham_2229"/>
<dbReference type="eggNOG" id="COG0740">
    <property type="taxonomic scope" value="Bacteria"/>
</dbReference>
<dbReference type="HOGENOM" id="CLU_058707_3_2_5"/>
<dbReference type="OrthoDB" id="9802800at2"/>
<dbReference type="Proteomes" id="UP000001953">
    <property type="component" value="Chromosome"/>
</dbReference>
<dbReference type="GO" id="GO:0005737">
    <property type="term" value="C:cytoplasm"/>
    <property type="evidence" value="ECO:0007669"/>
    <property type="project" value="UniProtKB-SubCell"/>
</dbReference>
<dbReference type="GO" id="GO:0009368">
    <property type="term" value="C:endopeptidase Clp complex"/>
    <property type="evidence" value="ECO:0007669"/>
    <property type="project" value="TreeGrafter"/>
</dbReference>
<dbReference type="GO" id="GO:0004176">
    <property type="term" value="F:ATP-dependent peptidase activity"/>
    <property type="evidence" value="ECO:0007669"/>
    <property type="project" value="InterPro"/>
</dbReference>
<dbReference type="GO" id="GO:0051117">
    <property type="term" value="F:ATPase binding"/>
    <property type="evidence" value="ECO:0007669"/>
    <property type="project" value="TreeGrafter"/>
</dbReference>
<dbReference type="GO" id="GO:0004252">
    <property type="term" value="F:serine-type endopeptidase activity"/>
    <property type="evidence" value="ECO:0007669"/>
    <property type="project" value="UniProtKB-UniRule"/>
</dbReference>
<dbReference type="GO" id="GO:0006515">
    <property type="term" value="P:protein quality control for misfolded or incompletely synthesized proteins"/>
    <property type="evidence" value="ECO:0007669"/>
    <property type="project" value="TreeGrafter"/>
</dbReference>
<dbReference type="CDD" id="cd07017">
    <property type="entry name" value="S14_ClpP_2"/>
    <property type="match status" value="1"/>
</dbReference>
<dbReference type="FunFam" id="3.90.226.10:FF:000001">
    <property type="entry name" value="ATP-dependent Clp protease proteolytic subunit"/>
    <property type="match status" value="1"/>
</dbReference>
<dbReference type="Gene3D" id="3.90.226.10">
    <property type="entry name" value="2-enoyl-CoA Hydratase, Chain A, domain 1"/>
    <property type="match status" value="1"/>
</dbReference>
<dbReference type="HAMAP" id="MF_00444">
    <property type="entry name" value="ClpP"/>
    <property type="match status" value="1"/>
</dbReference>
<dbReference type="InterPro" id="IPR001907">
    <property type="entry name" value="ClpP"/>
</dbReference>
<dbReference type="InterPro" id="IPR029045">
    <property type="entry name" value="ClpP/crotonase-like_dom_sf"/>
</dbReference>
<dbReference type="InterPro" id="IPR023562">
    <property type="entry name" value="ClpP/TepA"/>
</dbReference>
<dbReference type="InterPro" id="IPR033135">
    <property type="entry name" value="ClpP_His_AS"/>
</dbReference>
<dbReference type="NCBIfam" id="NF001368">
    <property type="entry name" value="PRK00277.1"/>
    <property type="match status" value="1"/>
</dbReference>
<dbReference type="NCBIfam" id="NF009205">
    <property type="entry name" value="PRK12553.1"/>
    <property type="match status" value="1"/>
</dbReference>
<dbReference type="PANTHER" id="PTHR10381">
    <property type="entry name" value="ATP-DEPENDENT CLP PROTEASE PROTEOLYTIC SUBUNIT"/>
    <property type="match status" value="1"/>
</dbReference>
<dbReference type="PANTHER" id="PTHR10381:SF70">
    <property type="entry name" value="ATP-DEPENDENT CLP PROTEASE PROTEOLYTIC SUBUNIT"/>
    <property type="match status" value="1"/>
</dbReference>
<dbReference type="Pfam" id="PF00574">
    <property type="entry name" value="CLP_protease"/>
    <property type="match status" value="1"/>
</dbReference>
<dbReference type="PRINTS" id="PR00127">
    <property type="entry name" value="CLPPROTEASEP"/>
</dbReference>
<dbReference type="SUPFAM" id="SSF52096">
    <property type="entry name" value="ClpP/crotonase"/>
    <property type="match status" value="1"/>
</dbReference>
<dbReference type="PROSITE" id="PS00382">
    <property type="entry name" value="CLP_PROTEASE_HIS"/>
    <property type="match status" value="1"/>
</dbReference>
<protein>
    <recommendedName>
        <fullName evidence="1">ATP-dependent Clp protease proteolytic subunit</fullName>
        <ecNumber evidence="1">3.4.21.92</ecNumber>
    </recommendedName>
    <alternativeName>
        <fullName evidence="1">Endopeptidase Clp</fullName>
    </alternativeName>
</protein>
<gene>
    <name evidence="1" type="primary">clpP</name>
    <name type="ordered locus">Nham_2229</name>
</gene>
<proteinExistence type="inferred from homology"/>
<name>CLPP_NITHX</name>
<evidence type="ECO:0000255" key="1">
    <source>
        <dbReference type="HAMAP-Rule" id="MF_00444"/>
    </source>
</evidence>
<feature type="chain" id="PRO_0000252829" description="ATP-dependent Clp protease proteolytic subunit">
    <location>
        <begin position="1"/>
        <end position="211"/>
    </location>
</feature>
<feature type="active site" description="Nucleophile" evidence="1">
    <location>
        <position position="106"/>
    </location>
</feature>
<feature type="active site" evidence="1">
    <location>
        <position position="131"/>
    </location>
</feature>
<keyword id="KW-0963">Cytoplasm</keyword>
<keyword id="KW-0378">Hydrolase</keyword>
<keyword id="KW-0645">Protease</keyword>
<keyword id="KW-1185">Reference proteome</keyword>
<keyword id="KW-0720">Serine protease</keyword>
<organism>
    <name type="scientific">Nitrobacter hamburgensis (strain DSM 10229 / NCIMB 13809 / X14)</name>
    <dbReference type="NCBI Taxonomy" id="323097"/>
    <lineage>
        <taxon>Bacteria</taxon>
        <taxon>Pseudomonadati</taxon>
        <taxon>Pseudomonadota</taxon>
        <taxon>Alphaproteobacteria</taxon>
        <taxon>Hyphomicrobiales</taxon>
        <taxon>Nitrobacteraceae</taxon>
        <taxon>Nitrobacter</taxon>
    </lineage>
</organism>
<comment type="function">
    <text evidence="1">Cleaves peptides in various proteins in a process that requires ATP hydrolysis. Has a chymotrypsin-like activity. Plays a major role in the degradation of misfolded proteins.</text>
</comment>
<comment type="catalytic activity">
    <reaction evidence="1">
        <text>Hydrolysis of proteins to small peptides in the presence of ATP and magnesium. alpha-casein is the usual test substrate. In the absence of ATP, only oligopeptides shorter than five residues are hydrolyzed (such as succinyl-Leu-Tyr-|-NHMec, and Leu-Tyr-Leu-|-Tyr-Trp, in which cleavage of the -Tyr-|-Leu- and -Tyr-|-Trp bonds also occurs).</text>
        <dbReference type="EC" id="3.4.21.92"/>
    </reaction>
</comment>
<comment type="subunit">
    <text evidence="1">Fourteen ClpP subunits assemble into 2 heptameric rings which stack back to back to give a disk-like structure with a central cavity, resembling the structure of eukaryotic proteasomes.</text>
</comment>
<comment type="subcellular location">
    <subcellularLocation>
        <location evidence="1">Cytoplasm</location>
    </subcellularLocation>
</comment>
<comment type="similarity">
    <text evidence="1">Belongs to the peptidase S14 family.</text>
</comment>
<accession>Q1QL76</accession>